<protein>
    <recommendedName>
        <fullName>Biogenesis of lysosome-related organelles complex 1 subunit 4</fullName>
        <shortName>BLOC-1 subunit 4</shortName>
    </recommendedName>
    <alternativeName>
        <fullName>Protein cappuccino homolog</fullName>
    </alternativeName>
</protein>
<feature type="chain" id="PRO_0000420195" description="Biogenesis of lysosome-related organelles complex 1 subunit 4">
    <location>
        <begin position="1"/>
        <end position="106"/>
    </location>
</feature>
<feature type="coiled-coil region" evidence="1">
    <location>
        <begin position="53"/>
        <end position="106"/>
    </location>
</feature>
<gene>
    <name type="primary">blos-4</name>
    <name type="ORF">T24H7.4</name>
</gene>
<proteinExistence type="evidence at protein level"/>
<reference key="1">
    <citation type="journal article" date="1998" name="Science">
        <title>Genome sequence of the nematode C. elegans: a platform for investigating biology.</title>
        <authorList>
            <consortium name="The C. elegans sequencing consortium"/>
        </authorList>
    </citation>
    <scope>NUCLEOTIDE SEQUENCE [LARGE SCALE GENOMIC DNA]</scope>
    <source>
        <strain>Bristol N2</strain>
    </source>
</reference>
<reference key="2">
    <citation type="journal article" date="2012" name="PLoS ONE">
        <title>C. elegans BLOC-1 Functions in Trafficking to Lysosome-Related Gut Granules.</title>
        <authorList>
            <person name="Hermann G.J."/>
            <person name="Scavarda E."/>
            <person name="Weis A.M."/>
            <person name="Saxton D.S."/>
            <person name="Thomas L.L."/>
            <person name="Salesky R."/>
            <person name="Somhegyi H."/>
            <person name="Curtin T.P."/>
            <person name="Barrett A."/>
            <person name="Foster O.K."/>
            <person name="Vine A."/>
            <person name="Erlich K."/>
            <person name="Kwan E."/>
            <person name="Rabbitts B.M."/>
            <person name="Warren K."/>
        </authorList>
    </citation>
    <scope>IDENTIFICATION IN THE BLOC-1 COMPLEX</scope>
    <scope>FUNCTION</scope>
    <scope>INTERACTION WITH GLO-2</scope>
</reference>
<name>BL1S4_CAEEL</name>
<keyword id="KW-0175">Coiled coil</keyword>
<keyword id="KW-1185">Reference proteome</keyword>
<organism>
    <name type="scientific">Caenorhabditis elegans</name>
    <dbReference type="NCBI Taxonomy" id="6239"/>
    <lineage>
        <taxon>Eukaryota</taxon>
        <taxon>Metazoa</taxon>
        <taxon>Ecdysozoa</taxon>
        <taxon>Nematoda</taxon>
        <taxon>Chromadorea</taxon>
        <taxon>Rhabditida</taxon>
        <taxon>Rhabditina</taxon>
        <taxon>Rhabditomorpha</taxon>
        <taxon>Rhabditoidea</taxon>
        <taxon>Rhabditidae</taxon>
        <taxon>Peloderinae</taxon>
        <taxon>Caenorhabditis</taxon>
    </lineage>
</organism>
<evidence type="ECO:0000255" key="1"/>
<evidence type="ECO:0000269" key="2">
    <source>
    </source>
</evidence>
<evidence type="ECO:0000305" key="3"/>
<dbReference type="EMBL" id="FO080720">
    <property type="protein sequence ID" value="CCD66145.1"/>
    <property type="molecule type" value="Genomic_DNA"/>
</dbReference>
<dbReference type="PIR" id="E88175">
    <property type="entry name" value="E88175"/>
</dbReference>
<dbReference type="RefSeq" id="NP_495247.1">
    <property type="nucleotide sequence ID" value="NM_062846.4"/>
</dbReference>
<dbReference type="SMR" id="Q22756"/>
<dbReference type="BioGRID" id="53522">
    <property type="interactions" value="8"/>
</dbReference>
<dbReference type="ComplexPortal" id="CPX-479">
    <property type="entry name" value="Bloc-1 complex"/>
</dbReference>
<dbReference type="DIP" id="DIP-25653N"/>
<dbReference type="FunCoup" id="Q22756">
    <property type="interactions" value="355"/>
</dbReference>
<dbReference type="IntAct" id="Q22756">
    <property type="interactions" value="5"/>
</dbReference>
<dbReference type="STRING" id="6239.T24H7.4.1"/>
<dbReference type="PaxDb" id="6239-T24H7.4.2"/>
<dbReference type="PeptideAtlas" id="Q22756"/>
<dbReference type="EnsemblMetazoa" id="T24H7.4.1">
    <property type="protein sequence ID" value="T24H7.4.1"/>
    <property type="gene ID" value="WBGene00020783"/>
</dbReference>
<dbReference type="GeneID" id="188869"/>
<dbReference type="KEGG" id="cel:CELE_T24H7.4"/>
<dbReference type="UCSC" id="T24H7.4">
    <property type="organism name" value="c. elegans"/>
</dbReference>
<dbReference type="AGR" id="WB:WBGene00020783"/>
<dbReference type="CTD" id="188869"/>
<dbReference type="WormBase" id="T24H7.4">
    <property type="protein sequence ID" value="CE02886"/>
    <property type="gene ID" value="WBGene00020783"/>
    <property type="gene designation" value="blos-4"/>
</dbReference>
<dbReference type="eggNOG" id="ENOG502TIEA">
    <property type="taxonomic scope" value="Eukaryota"/>
</dbReference>
<dbReference type="HOGENOM" id="CLU_2252437_0_0_1"/>
<dbReference type="InParanoid" id="Q22756"/>
<dbReference type="OMA" id="YNVVDRQ"/>
<dbReference type="OrthoDB" id="5831477at2759"/>
<dbReference type="PRO" id="PR:Q22756"/>
<dbReference type="Proteomes" id="UP000001940">
    <property type="component" value="Chromosome II"/>
</dbReference>
<dbReference type="Bgee" id="WBGene00020783">
    <property type="expression patterns" value="Expressed in germ line (C elegans) and 4 other cell types or tissues"/>
</dbReference>
<dbReference type="GO" id="GO:0031082">
    <property type="term" value="C:BLOC complex"/>
    <property type="evidence" value="ECO:0000303"/>
    <property type="project" value="ComplexPortal"/>
</dbReference>
<dbReference type="GO" id="GO:0031083">
    <property type="term" value="C:BLOC-1 complex"/>
    <property type="evidence" value="ECO:0000304"/>
    <property type="project" value="UniProtKB"/>
</dbReference>
<dbReference type="GO" id="GO:0016197">
    <property type="term" value="P:endosomal transport"/>
    <property type="evidence" value="ECO:0000315"/>
    <property type="project" value="UniProtKB"/>
</dbReference>
<dbReference type="GO" id="GO:1904757">
    <property type="term" value="P:positive regulation of gut granule assembly"/>
    <property type="evidence" value="ECO:0000303"/>
    <property type="project" value="ComplexPortal"/>
</dbReference>
<accession>Q22756</accession>
<comment type="function">
    <text evidence="2">Component of the biogenesis of lysosome-related organelles complex-1 (BLOC-1) involved in gut granule biogenesis.</text>
</comment>
<comment type="subunit">
    <text evidence="2">Component of the biogenesis of lysosome-related organelles complex-1 (BLOC-1) composed at least of blos-1, blos-2, blos-4, dsbn-1, glo-2, mutd-1 and snpn-1. Interacts with glo-2.</text>
</comment>
<comment type="similarity">
    <text evidence="3">Belongs to the BLOC1S4 family.</text>
</comment>
<sequence length="106" mass="11826">MTGVDDISSNVHKLVGVTAGMNTAASTGPMNLVLDKCSVVLEELRTIQILTETHSEGLSEQLKMTEKNILEMENLFDQIDQLCLFVQKAKSDLDKLEKLYNVVDRQ</sequence>